<comment type="function">
    <text evidence="4">Required for mitochondrial translation, plays a role in maintaining the stability of the small ribosomal subunit and the 12S rRNA that are required for mitoribosome formation.</text>
</comment>
<comment type="subunit">
    <text evidence="3">Component of the mitochondrial small ribosomal subunit (mt-SSU). Mature mammalian 55S mitochondrial ribosomes consist of a small (28S) and a large (39S) subunit. The 28S small subunit contains a 12S ribosomal RNA (12S mt-rRNA) and 30 different proteins. The 39S large subunit contains a 16S rRNA (16S mt-rRNA), a copy of mitochondrial valine transfer RNA (mt-tRNA(Val)), which plays an integral structural role, and 52 different proteins.</text>
</comment>
<comment type="subcellular location">
    <subcellularLocation>
        <location evidence="2">Mitochondrion</location>
    </subcellularLocation>
</comment>
<comment type="disease" evidence="4">
    <disease id="DI-05097">
        <name>Combined oxidative phosphorylation deficiency 32</name>
        <acronym>COXPD32</acronym>
        <description>An autosomal recessive disorder due to deficiency of mitochondrial respiratory chain complexes, I, III and IV, and characterized by delayed psychomotor development and neurodevelopmental regression. Additional variable symptoms include poor or absent speech, inability to walk, and abnormal movements.</description>
        <dbReference type="MIM" id="617664"/>
    </disease>
    <text>The disease is caused by variants affecting the gene represented in this entry.</text>
</comment>
<comment type="similarity">
    <text evidence="6">Belongs to the mitochondrion-specific ribosomal protein mS34 family.</text>
</comment>
<protein>
    <recommendedName>
        <fullName evidence="5">Small ribosomal subunit protein mS34</fullName>
    </recommendedName>
    <alternativeName>
        <fullName>28S ribosomal protein S34, mitochondrial</fullName>
        <shortName>MRP-S34</shortName>
        <shortName>S34mt</shortName>
    </alternativeName>
</protein>
<accession>P82930</accession>
<accession>Q9BVI7</accession>
<dbReference type="EMBL" id="BC001182">
    <property type="protein sequence ID" value="AAH01182.1"/>
    <property type="molecule type" value="mRNA"/>
</dbReference>
<dbReference type="CCDS" id="CCDS10444.1"/>
<dbReference type="RefSeq" id="NP_001287829.1">
    <property type="nucleotide sequence ID" value="NM_001300900.1"/>
</dbReference>
<dbReference type="RefSeq" id="NP_076425.1">
    <property type="nucleotide sequence ID" value="NM_023936.2"/>
</dbReference>
<dbReference type="PDB" id="3J9M">
    <property type="method" value="EM"/>
    <property type="resolution" value="3.50 A"/>
    <property type="chains" value="A0=1-218"/>
</dbReference>
<dbReference type="PDB" id="6NU2">
    <property type="method" value="EM"/>
    <property type="resolution" value="3.90 A"/>
    <property type="chains" value="A0=6-213"/>
</dbReference>
<dbReference type="PDB" id="6RW4">
    <property type="method" value="EM"/>
    <property type="resolution" value="2.97 A"/>
    <property type="chains" value="0=1-218"/>
</dbReference>
<dbReference type="PDB" id="6RW5">
    <property type="method" value="EM"/>
    <property type="resolution" value="3.14 A"/>
    <property type="chains" value="0=1-218"/>
</dbReference>
<dbReference type="PDB" id="6VLZ">
    <property type="method" value="EM"/>
    <property type="resolution" value="2.97 A"/>
    <property type="chains" value="A0=1-218"/>
</dbReference>
<dbReference type="PDB" id="6VMI">
    <property type="method" value="EM"/>
    <property type="resolution" value="2.96 A"/>
    <property type="chains" value="A0=1-218"/>
</dbReference>
<dbReference type="PDB" id="6ZM5">
    <property type="method" value="EM"/>
    <property type="resolution" value="2.89 A"/>
    <property type="chains" value="A0=1-218"/>
</dbReference>
<dbReference type="PDB" id="6ZM6">
    <property type="method" value="EM"/>
    <property type="resolution" value="2.59 A"/>
    <property type="chains" value="A0=1-218"/>
</dbReference>
<dbReference type="PDB" id="6ZS9">
    <property type="method" value="EM"/>
    <property type="resolution" value="4.00 A"/>
    <property type="chains" value="A0=1-218"/>
</dbReference>
<dbReference type="PDB" id="6ZSA">
    <property type="method" value="EM"/>
    <property type="resolution" value="4.00 A"/>
    <property type="chains" value="A0=1-218"/>
</dbReference>
<dbReference type="PDB" id="6ZSB">
    <property type="method" value="EM"/>
    <property type="resolution" value="4.50 A"/>
    <property type="chains" value="A0=1-218"/>
</dbReference>
<dbReference type="PDB" id="6ZSC">
    <property type="method" value="EM"/>
    <property type="resolution" value="3.50 A"/>
    <property type="chains" value="A0=1-218"/>
</dbReference>
<dbReference type="PDB" id="6ZSD">
    <property type="method" value="EM"/>
    <property type="resolution" value="3.70 A"/>
    <property type="chains" value="A0=1-218"/>
</dbReference>
<dbReference type="PDB" id="6ZSE">
    <property type="method" value="EM"/>
    <property type="resolution" value="5.00 A"/>
    <property type="chains" value="A0=1-218"/>
</dbReference>
<dbReference type="PDB" id="6ZSG">
    <property type="method" value="EM"/>
    <property type="resolution" value="4.00 A"/>
    <property type="chains" value="A0=1-218"/>
</dbReference>
<dbReference type="PDB" id="7A5F">
    <property type="method" value="EM"/>
    <property type="resolution" value="4.40 A"/>
    <property type="chains" value="a6=1-218"/>
</dbReference>
<dbReference type="PDB" id="7A5G">
    <property type="method" value="EM"/>
    <property type="resolution" value="4.33 A"/>
    <property type="chains" value="a6=1-218"/>
</dbReference>
<dbReference type="PDB" id="7A5I">
    <property type="method" value="EM"/>
    <property type="resolution" value="3.70 A"/>
    <property type="chains" value="a6=1-218"/>
</dbReference>
<dbReference type="PDB" id="7A5K">
    <property type="method" value="EM"/>
    <property type="resolution" value="3.70 A"/>
    <property type="chains" value="a6=1-218"/>
</dbReference>
<dbReference type="PDB" id="7L08">
    <property type="method" value="EM"/>
    <property type="resolution" value="3.49 A"/>
    <property type="chains" value="A0=1-218"/>
</dbReference>
<dbReference type="PDB" id="7OG4">
    <property type="method" value="EM"/>
    <property type="resolution" value="3.80 A"/>
    <property type="chains" value="A0=1-218"/>
</dbReference>
<dbReference type="PDB" id="7P2E">
    <property type="method" value="EM"/>
    <property type="resolution" value="2.40 A"/>
    <property type="chains" value="0=1-218"/>
</dbReference>
<dbReference type="PDB" id="7PNX">
    <property type="method" value="EM"/>
    <property type="resolution" value="2.76 A"/>
    <property type="chains" value="0=1-218"/>
</dbReference>
<dbReference type="PDB" id="7PNY">
    <property type="method" value="EM"/>
    <property type="resolution" value="3.06 A"/>
    <property type="chains" value="0=1-218"/>
</dbReference>
<dbReference type="PDB" id="7PNZ">
    <property type="method" value="EM"/>
    <property type="resolution" value="3.09 A"/>
    <property type="chains" value="0=1-218"/>
</dbReference>
<dbReference type="PDB" id="7PO0">
    <property type="method" value="EM"/>
    <property type="resolution" value="2.90 A"/>
    <property type="chains" value="0=1-218"/>
</dbReference>
<dbReference type="PDB" id="7PO1">
    <property type="method" value="EM"/>
    <property type="resolution" value="2.92 A"/>
    <property type="chains" value="0=1-218"/>
</dbReference>
<dbReference type="PDB" id="7PO2">
    <property type="method" value="EM"/>
    <property type="resolution" value="3.09 A"/>
    <property type="chains" value="0=1-218"/>
</dbReference>
<dbReference type="PDB" id="7PO3">
    <property type="method" value="EM"/>
    <property type="resolution" value="2.92 A"/>
    <property type="chains" value="0=1-218"/>
</dbReference>
<dbReference type="PDB" id="7QI4">
    <property type="method" value="EM"/>
    <property type="resolution" value="2.21 A"/>
    <property type="chains" value="A0=2-218"/>
</dbReference>
<dbReference type="PDB" id="7QI5">
    <property type="method" value="EM"/>
    <property type="resolution" value="2.63 A"/>
    <property type="chains" value="A0=2-218"/>
</dbReference>
<dbReference type="PDB" id="7QI6">
    <property type="method" value="EM"/>
    <property type="resolution" value="2.98 A"/>
    <property type="chains" value="A0=2-218"/>
</dbReference>
<dbReference type="PDB" id="8ANY">
    <property type="method" value="EM"/>
    <property type="resolution" value="2.85 A"/>
    <property type="chains" value="A0=2-218"/>
</dbReference>
<dbReference type="PDB" id="8CSP">
    <property type="method" value="EM"/>
    <property type="resolution" value="2.66 A"/>
    <property type="chains" value="0=1-218"/>
</dbReference>
<dbReference type="PDB" id="8CSQ">
    <property type="method" value="EM"/>
    <property type="resolution" value="2.54 A"/>
    <property type="chains" value="0=1-218"/>
</dbReference>
<dbReference type="PDB" id="8CSR">
    <property type="method" value="EM"/>
    <property type="resolution" value="2.54 A"/>
    <property type="chains" value="0=1-218"/>
</dbReference>
<dbReference type="PDB" id="8CSS">
    <property type="method" value="EM"/>
    <property type="resolution" value="2.36 A"/>
    <property type="chains" value="0=1-218"/>
</dbReference>
<dbReference type="PDB" id="8CST">
    <property type="method" value="EM"/>
    <property type="resolution" value="2.85 A"/>
    <property type="chains" value="0=1-218"/>
</dbReference>
<dbReference type="PDB" id="8CSU">
    <property type="method" value="EM"/>
    <property type="resolution" value="3.03 A"/>
    <property type="chains" value="0=1-218"/>
</dbReference>
<dbReference type="PDB" id="8K2A">
    <property type="method" value="EM"/>
    <property type="resolution" value="2.90 A"/>
    <property type="chains" value="Sj=1-218"/>
</dbReference>
<dbReference type="PDB" id="8OIR">
    <property type="method" value="EM"/>
    <property type="resolution" value="3.10 A"/>
    <property type="chains" value="Aj=1-218"/>
</dbReference>
<dbReference type="PDB" id="8OIS">
    <property type="method" value="EM"/>
    <property type="resolution" value="3.00 A"/>
    <property type="chains" value="Aj=1-218"/>
</dbReference>
<dbReference type="PDB" id="8QRK">
    <property type="method" value="EM"/>
    <property type="resolution" value="6.69 A"/>
    <property type="chains" value="0=1-218"/>
</dbReference>
<dbReference type="PDB" id="8QRL">
    <property type="method" value="EM"/>
    <property type="resolution" value="3.34 A"/>
    <property type="chains" value="0=1-218"/>
</dbReference>
<dbReference type="PDB" id="8QRM">
    <property type="method" value="EM"/>
    <property type="resolution" value="3.05 A"/>
    <property type="chains" value="0=1-218"/>
</dbReference>
<dbReference type="PDB" id="8QRN">
    <property type="method" value="EM"/>
    <property type="resolution" value="2.98 A"/>
    <property type="chains" value="0=1-218"/>
</dbReference>
<dbReference type="PDB" id="8RRI">
    <property type="method" value="EM"/>
    <property type="resolution" value="2.40 A"/>
    <property type="chains" value="A0=2-218"/>
</dbReference>
<dbReference type="PDB" id="8XT0">
    <property type="method" value="EM"/>
    <property type="resolution" value="3.20 A"/>
    <property type="chains" value="Sj=1-218"/>
</dbReference>
<dbReference type="PDB" id="8XT2">
    <property type="method" value="EM"/>
    <property type="resolution" value="3.30 A"/>
    <property type="chains" value="Sj=1-218"/>
</dbReference>
<dbReference type="PDBsum" id="3J9M"/>
<dbReference type="PDBsum" id="6NU2"/>
<dbReference type="PDBsum" id="6RW4"/>
<dbReference type="PDBsum" id="6RW5"/>
<dbReference type="PDBsum" id="6VLZ"/>
<dbReference type="PDBsum" id="6VMI"/>
<dbReference type="PDBsum" id="6ZM5"/>
<dbReference type="PDBsum" id="6ZM6"/>
<dbReference type="PDBsum" id="6ZS9"/>
<dbReference type="PDBsum" id="6ZSA"/>
<dbReference type="PDBsum" id="6ZSB"/>
<dbReference type="PDBsum" id="6ZSC"/>
<dbReference type="PDBsum" id="6ZSD"/>
<dbReference type="PDBsum" id="6ZSE"/>
<dbReference type="PDBsum" id="6ZSG"/>
<dbReference type="PDBsum" id="7A5F"/>
<dbReference type="PDBsum" id="7A5G"/>
<dbReference type="PDBsum" id="7A5I"/>
<dbReference type="PDBsum" id="7A5K"/>
<dbReference type="PDBsum" id="7L08"/>
<dbReference type="PDBsum" id="7OG4"/>
<dbReference type="PDBsum" id="7P2E"/>
<dbReference type="PDBsum" id="7PNX"/>
<dbReference type="PDBsum" id="7PNY"/>
<dbReference type="PDBsum" id="7PNZ"/>
<dbReference type="PDBsum" id="7PO0"/>
<dbReference type="PDBsum" id="7PO1"/>
<dbReference type="PDBsum" id="7PO2"/>
<dbReference type="PDBsum" id="7PO3"/>
<dbReference type="PDBsum" id="7QI4"/>
<dbReference type="PDBsum" id="7QI5"/>
<dbReference type="PDBsum" id="7QI6"/>
<dbReference type="PDBsum" id="8ANY"/>
<dbReference type="PDBsum" id="8CSP"/>
<dbReference type="PDBsum" id="8CSQ"/>
<dbReference type="PDBsum" id="8CSR"/>
<dbReference type="PDBsum" id="8CSS"/>
<dbReference type="PDBsum" id="8CST"/>
<dbReference type="PDBsum" id="8CSU"/>
<dbReference type="PDBsum" id="8K2A"/>
<dbReference type="PDBsum" id="8OIR"/>
<dbReference type="PDBsum" id="8OIS"/>
<dbReference type="PDBsum" id="8QRK"/>
<dbReference type="PDBsum" id="8QRL"/>
<dbReference type="PDBsum" id="8QRM"/>
<dbReference type="PDBsum" id="8QRN"/>
<dbReference type="PDBsum" id="8RRI"/>
<dbReference type="PDBsum" id="8XT0"/>
<dbReference type="PDBsum" id="8XT2"/>
<dbReference type="EMDB" id="EMD-0514"/>
<dbReference type="EMDB" id="EMD-10021"/>
<dbReference type="EMDB" id="EMD-10022"/>
<dbReference type="EMDB" id="EMD-11278"/>
<dbReference type="EMDB" id="EMD-11279"/>
<dbReference type="EMDB" id="EMD-11390"/>
<dbReference type="EMDB" id="EMD-11391"/>
<dbReference type="EMDB" id="EMD-11392"/>
<dbReference type="EMDB" id="EMD-11393"/>
<dbReference type="EMDB" id="EMD-11394"/>
<dbReference type="EMDB" id="EMD-11395"/>
<dbReference type="EMDB" id="EMD-11397"/>
<dbReference type="EMDB" id="EMD-11641"/>
<dbReference type="EMDB" id="EMD-11642"/>
<dbReference type="EMDB" id="EMD-11644"/>
<dbReference type="EMDB" id="EMD-11646"/>
<dbReference type="EMDB" id="EMD-12877"/>
<dbReference type="EMDB" id="EMD-13170"/>
<dbReference type="EMDB" id="EMD-13555"/>
<dbReference type="EMDB" id="EMD-13556"/>
<dbReference type="EMDB" id="EMD-13557"/>
<dbReference type="EMDB" id="EMD-13558"/>
<dbReference type="EMDB" id="EMD-13559"/>
<dbReference type="EMDB" id="EMD-13560"/>
<dbReference type="EMDB" id="EMD-13561"/>
<dbReference type="EMDB" id="EMD-13980"/>
<dbReference type="EMDB" id="EMD-13981"/>
<dbReference type="EMDB" id="EMD-13982"/>
<dbReference type="EMDB" id="EMD-15544"/>
<dbReference type="EMDB" id="EMD-16897"/>
<dbReference type="EMDB" id="EMD-16898"/>
<dbReference type="EMDB" id="EMD-19460"/>
<dbReference type="EMDB" id="EMD-21233"/>
<dbReference type="EMDB" id="EMD-21242"/>
<dbReference type="EMDB" id="EMD-23096"/>
<dbReference type="EMDB" id="EMD-26966"/>
<dbReference type="EMDB" id="EMD-26967"/>
<dbReference type="EMDB" id="EMD-26968"/>
<dbReference type="EMDB" id="EMD-26969"/>
<dbReference type="EMDB" id="EMD-26970"/>
<dbReference type="EMDB" id="EMD-26971"/>
<dbReference type="EMDB" id="EMD-36836"/>
<dbReference type="EMDB" id="EMD-38632"/>
<dbReference type="EMDB" id="EMD-38634"/>
<dbReference type="SMR" id="P82930"/>
<dbReference type="BioGRID" id="122442">
    <property type="interactions" value="329"/>
</dbReference>
<dbReference type="ComplexPortal" id="CPX-5225">
    <property type="entry name" value="28S mitochondrial small ribosomal subunit"/>
</dbReference>
<dbReference type="CORUM" id="P82930"/>
<dbReference type="FunCoup" id="P82930">
    <property type="interactions" value="1044"/>
</dbReference>
<dbReference type="IntAct" id="P82930">
    <property type="interactions" value="163"/>
</dbReference>
<dbReference type="MINT" id="P82930"/>
<dbReference type="STRING" id="9606.ENSP00000177742"/>
<dbReference type="GlyGen" id="P82930">
    <property type="glycosylation" value="1 site, 1 O-linked glycan (1 site)"/>
</dbReference>
<dbReference type="iPTMnet" id="P82930"/>
<dbReference type="MetOSite" id="P82930"/>
<dbReference type="PhosphoSitePlus" id="P82930"/>
<dbReference type="SwissPalm" id="P82930"/>
<dbReference type="BioMuta" id="MRPS34"/>
<dbReference type="DMDM" id="24212369"/>
<dbReference type="jPOST" id="P82930"/>
<dbReference type="MassIVE" id="P82930"/>
<dbReference type="PaxDb" id="9606-ENSP00000177742"/>
<dbReference type="PeptideAtlas" id="P82930"/>
<dbReference type="ProteomicsDB" id="57722"/>
<dbReference type="Pumba" id="P82930"/>
<dbReference type="TopDownProteomics" id="P82930"/>
<dbReference type="Antibodypedia" id="23234">
    <property type="antibodies" value="313 antibodies from 27 providers"/>
</dbReference>
<dbReference type="DNASU" id="65993"/>
<dbReference type="Ensembl" id="ENST00000397375.7">
    <property type="protein sequence ID" value="ENSP00000380531.3"/>
    <property type="gene ID" value="ENSG00000074071.15"/>
</dbReference>
<dbReference type="GeneID" id="65993"/>
<dbReference type="KEGG" id="hsa:65993"/>
<dbReference type="MANE-Select" id="ENST00000397375.7">
    <property type="protein sequence ID" value="ENSP00000380531.3"/>
    <property type="RefSeq nucleotide sequence ID" value="NM_023936.2"/>
    <property type="RefSeq protein sequence ID" value="NP_076425.1"/>
</dbReference>
<dbReference type="UCSC" id="uc002cmo.4">
    <property type="organism name" value="human"/>
</dbReference>
<dbReference type="AGR" id="HGNC:16618"/>
<dbReference type="CTD" id="65993"/>
<dbReference type="DisGeNET" id="65993"/>
<dbReference type="GeneCards" id="MRPS34"/>
<dbReference type="HGNC" id="HGNC:16618">
    <property type="gene designation" value="MRPS34"/>
</dbReference>
<dbReference type="HPA" id="ENSG00000074071">
    <property type="expression patterns" value="Low tissue specificity"/>
</dbReference>
<dbReference type="MalaCards" id="MRPS34"/>
<dbReference type="MIM" id="611994">
    <property type="type" value="gene"/>
</dbReference>
<dbReference type="MIM" id="617664">
    <property type="type" value="phenotype"/>
</dbReference>
<dbReference type="neXtProt" id="NX_P82930"/>
<dbReference type="OpenTargets" id="ENSG00000074071"/>
<dbReference type="PharmGKB" id="PA31021"/>
<dbReference type="VEuPathDB" id="HostDB:ENSG00000074071"/>
<dbReference type="eggNOG" id="ENOG502QSI0">
    <property type="taxonomic scope" value="Eukaryota"/>
</dbReference>
<dbReference type="GeneTree" id="ENSGT00390000008964"/>
<dbReference type="HOGENOM" id="CLU_116794_0_0_1"/>
<dbReference type="InParanoid" id="P82930"/>
<dbReference type="OrthoDB" id="16434at2759"/>
<dbReference type="PAN-GO" id="P82930">
    <property type="GO annotations" value="3 GO annotations based on evolutionary models"/>
</dbReference>
<dbReference type="PhylomeDB" id="P82930"/>
<dbReference type="TreeFam" id="TF320386"/>
<dbReference type="PathwayCommons" id="P82930"/>
<dbReference type="Reactome" id="R-HSA-5368286">
    <property type="pathway name" value="Mitochondrial translation initiation"/>
</dbReference>
<dbReference type="Reactome" id="R-HSA-5389840">
    <property type="pathway name" value="Mitochondrial translation elongation"/>
</dbReference>
<dbReference type="Reactome" id="R-HSA-5419276">
    <property type="pathway name" value="Mitochondrial translation termination"/>
</dbReference>
<dbReference type="SignaLink" id="P82930"/>
<dbReference type="SIGNOR" id="P82930"/>
<dbReference type="BioGRID-ORCS" id="65993">
    <property type="hits" value="497 hits in 1150 CRISPR screens"/>
</dbReference>
<dbReference type="ChiTaRS" id="MRPS34">
    <property type="organism name" value="human"/>
</dbReference>
<dbReference type="GenomeRNAi" id="65993"/>
<dbReference type="Pharos" id="P82930">
    <property type="development level" value="Tbio"/>
</dbReference>
<dbReference type="PRO" id="PR:P82930"/>
<dbReference type="Proteomes" id="UP000005640">
    <property type="component" value="Chromosome 16"/>
</dbReference>
<dbReference type="RNAct" id="P82930">
    <property type="molecule type" value="protein"/>
</dbReference>
<dbReference type="Bgee" id="ENSG00000074071">
    <property type="expression patterns" value="Expressed in mucosa of transverse colon and 188 other cell types or tissues"/>
</dbReference>
<dbReference type="ExpressionAtlas" id="P82930">
    <property type="expression patterns" value="baseline and differential"/>
</dbReference>
<dbReference type="GO" id="GO:0005743">
    <property type="term" value="C:mitochondrial inner membrane"/>
    <property type="evidence" value="ECO:0000304"/>
    <property type="project" value="Reactome"/>
</dbReference>
<dbReference type="GO" id="GO:0005763">
    <property type="term" value="C:mitochondrial small ribosomal subunit"/>
    <property type="evidence" value="ECO:0000250"/>
    <property type="project" value="UniProtKB"/>
</dbReference>
<dbReference type="GO" id="GO:0005739">
    <property type="term" value="C:mitochondrion"/>
    <property type="evidence" value="ECO:0000314"/>
    <property type="project" value="HPA"/>
</dbReference>
<dbReference type="GO" id="GO:0003735">
    <property type="term" value="F:structural constituent of ribosome"/>
    <property type="evidence" value="ECO:0000315"/>
    <property type="project" value="UniProtKB"/>
</dbReference>
<dbReference type="GO" id="GO:0032543">
    <property type="term" value="P:mitochondrial translation"/>
    <property type="evidence" value="ECO:0000315"/>
    <property type="project" value="UniProtKB"/>
</dbReference>
<dbReference type="InterPro" id="IPR032053">
    <property type="entry name" value="Ribosomal_mS34"/>
</dbReference>
<dbReference type="PANTHER" id="PTHR28589">
    <property type="entry name" value="28S RIBOSOMAL PROTEIN S34, MITOCHONDRIAL"/>
    <property type="match status" value="1"/>
</dbReference>
<dbReference type="PANTHER" id="PTHR28589:SF1">
    <property type="entry name" value="SMALL RIBOSOMAL SUBUNIT PROTEIN MS34"/>
    <property type="match status" value="1"/>
</dbReference>
<dbReference type="Pfam" id="PF16053">
    <property type="entry name" value="MRP-S34"/>
    <property type="match status" value="1"/>
</dbReference>
<gene>
    <name type="primary">MRPS34</name>
</gene>
<evidence type="ECO:0000256" key="1">
    <source>
        <dbReference type="SAM" id="MobiDB-lite"/>
    </source>
</evidence>
<evidence type="ECO:0000269" key="2">
    <source>
    </source>
</evidence>
<evidence type="ECO:0000269" key="3">
    <source>
    </source>
</evidence>
<evidence type="ECO:0000269" key="4">
    <source>
    </source>
</evidence>
<evidence type="ECO:0000303" key="5">
    <source>
    </source>
</evidence>
<evidence type="ECO:0000305" key="6"/>
<evidence type="ECO:0007829" key="7">
    <source>
        <dbReference type="PDB" id="8CSP"/>
    </source>
</evidence>
<evidence type="ECO:0007829" key="8">
    <source>
        <dbReference type="PDB" id="8CSS"/>
    </source>
</evidence>
<evidence type="ECO:0007829" key="9">
    <source>
        <dbReference type="PDB" id="8QRN"/>
    </source>
</evidence>
<reference evidence="6" key="1">
    <citation type="journal article" date="2004" name="Genome Res.">
        <title>The status, quality, and expansion of the NIH full-length cDNA project: the Mammalian Gene Collection (MGC).</title>
        <authorList>
            <consortium name="The MGC Project Team"/>
        </authorList>
    </citation>
    <scope>NUCLEOTIDE SEQUENCE [LARGE SCALE MRNA]</scope>
    <source>
        <tissue>Eye</tissue>
    </source>
</reference>
<reference evidence="6" key="2">
    <citation type="journal article" date="2001" name="J. Biol. Chem.">
        <title>The small subunit of the mammalian mitochondrial ribosome: identification of the full complement of ribosomal proteins present.</title>
        <authorList>
            <person name="Koc E.C."/>
            <person name="Burkhart W."/>
            <person name="Blackburn K."/>
            <person name="Moseley A."/>
            <person name="Spremulli L.L."/>
        </authorList>
    </citation>
    <scope>IDENTIFICATION</scope>
</reference>
<reference key="3">
    <citation type="journal article" date="2011" name="BMC Syst. Biol.">
        <title>Initial characterization of the human central proteome.</title>
        <authorList>
            <person name="Burkard T.R."/>
            <person name="Planyavsky M."/>
            <person name="Kaupe I."/>
            <person name="Breitwieser F.P."/>
            <person name="Buerckstuemmer T."/>
            <person name="Bennett K.L."/>
            <person name="Superti-Furga G."/>
            <person name="Colinge J."/>
        </authorList>
    </citation>
    <scope>IDENTIFICATION BY MASS SPECTROMETRY [LARGE SCALE ANALYSIS]</scope>
</reference>
<reference key="4">
    <citation type="journal article" date="2015" name="Proteomics">
        <title>N-terminome analysis of the human mitochondrial proteome.</title>
        <authorList>
            <person name="Vaca Jacome A.S."/>
            <person name="Rabilloud T."/>
            <person name="Schaeffer-Reiss C."/>
            <person name="Rompais M."/>
            <person name="Ayoub D."/>
            <person name="Lane L."/>
            <person name="Bairoch A."/>
            <person name="Van Dorsselaer A."/>
            <person name="Carapito C."/>
        </authorList>
    </citation>
    <scope>IDENTIFICATION BY MASS SPECTROMETRY [LARGE SCALE ANALYSIS]</scope>
</reference>
<reference key="5">
    <citation type="journal article" date="2017" name="Am. J. Hum. Genet.">
        <title>Biallelic Mutations in MRPS34 Lead to Instability of the Small Mitoribosomal Subunit and Leigh Syndrome.</title>
        <authorList>
            <person name="Lake N.J."/>
            <person name="Webb B.D."/>
            <person name="Stroud D.A."/>
            <person name="Richman T.R."/>
            <person name="Ruzzenente B."/>
            <person name="Compton A.G."/>
            <person name="Mountford H.S."/>
            <person name="Pulman J."/>
            <person name="Zangarelli C."/>
            <person name="Rio M."/>
            <person name="Bodaert N."/>
            <person name="Assouline Z."/>
            <person name="Sherpa M.D."/>
            <person name="Schadt E.E."/>
            <person name="Houten S.M."/>
            <person name="Byrnes J."/>
            <person name="McCormick E.M."/>
            <person name="Zolkipli-Cunningham Z."/>
            <person name="Haude K."/>
            <person name="Zhang Z."/>
            <person name="Retterer K."/>
            <person name="Bai R."/>
            <person name="Calvo S.E."/>
            <person name="Mootha V.K."/>
            <person name="Christodoulou J."/>
            <person name="Roetig A."/>
            <person name="Filipovska A."/>
            <person name="Cristian I."/>
            <person name="Falk M.J."/>
            <person name="Metodiev M.D."/>
            <person name="Thorburn D.R."/>
        </authorList>
    </citation>
    <scope>FUNCTION</scope>
    <scope>INVOLVEMENT IN COXPD32</scope>
    <scope>VARIANTS COXPD32 LYS-13; 32-GLN--VAL-218 DEL AND 100-VAL--GLN-107 DEL</scope>
    <scope>CHARACTERIZATION OF VARIANTS COXPD32 LYS-13 AND 32-GLN--VAL-218 DEL</scope>
</reference>
<reference key="6">
    <citation type="journal article" date="2015" name="Science">
        <title>Ribosome. The structure of the human mitochondrial ribosome.</title>
        <authorList>
            <person name="Amunts A."/>
            <person name="Brown A."/>
            <person name="Toots J."/>
            <person name="Scheres S.H."/>
            <person name="Ramakrishnan V."/>
        </authorList>
    </citation>
    <scope>STRUCTURE BY ELECTRON MICROSCOPY (3.50 ANGSTROMS)</scope>
    <scope>SUBUNIT</scope>
</reference>
<proteinExistence type="evidence at protein level"/>
<keyword id="KW-0002">3D-structure</keyword>
<keyword id="KW-0225">Disease variant</keyword>
<keyword id="KW-0496">Mitochondrion</keyword>
<keyword id="KW-1274">Primary mitochondrial disease</keyword>
<keyword id="KW-1267">Proteomics identification</keyword>
<keyword id="KW-1185">Reference proteome</keyword>
<keyword id="KW-0687">Ribonucleoprotein</keyword>
<keyword id="KW-0689">Ribosomal protein</keyword>
<feature type="chain" id="PRO_0000087730" description="Small ribosomal subunit protein mS34">
    <location>
        <begin position="1"/>
        <end position="218"/>
    </location>
</feature>
<feature type="region of interest" description="Disordered" evidence="1">
    <location>
        <begin position="180"/>
        <end position="218"/>
    </location>
</feature>
<feature type="compositionally biased region" description="Basic and acidic residues" evidence="1">
    <location>
        <begin position="196"/>
        <end position="212"/>
    </location>
</feature>
<feature type="sequence variant" id="VAR_080218" description="In COXPD32; significant decrease in protein levels; destabilizes the small ribosomal subunit resulting in impaired mitochondrial translation; dbSNP:rs1131692037." evidence="4">
    <original>E</original>
    <variation>K</variation>
    <location>
        <position position="13"/>
    </location>
</feature>
<feature type="sequence variant" id="VAR_080219" description="In COXPD32; significant decrease in protein levels; destabilizes the small ribosomal subunit resulting in impaired mitochondrial translation." evidence="4">
    <location>
        <begin position="32"/>
        <end position="218"/>
    </location>
</feature>
<feature type="sequence variant" id="VAR_052050" description="In dbSNP:rs11552431.">
    <original>L</original>
    <variation>I</variation>
    <location>
        <position position="33"/>
    </location>
</feature>
<feature type="sequence variant" id="VAR_080220" description="In COXPD32." evidence="4">
    <location>
        <begin position="100"/>
        <end position="107"/>
    </location>
</feature>
<feature type="helix" evidence="8">
    <location>
        <begin position="10"/>
        <end position="25"/>
    </location>
</feature>
<feature type="helix" evidence="8">
    <location>
        <begin position="30"/>
        <end position="33"/>
    </location>
</feature>
<feature type="turn" evidence="8">
    <location>
        <begin position="38"/>
        <end position="41"/>
    </location>
</feature>
<feature type="turn" evidence="8">
    <location>
        <begin position="44"/>
        <end position="46"/>
    </location>
</feature>
<feature type="helix" evidence="8">
    <location>
        <begin position="52"/>
        <end position="54"/>
    </location>
</feature>
<feature type="helix" evidence="8">
    <location>
        <begin position="55"/>
        <end position="60"/>
    </location>
</feature>
<feature type="helix" evidence="8">
    <location>
        <begin position="64"/>
        <end position="68"/>
    </location>
</feature>
<feature type="helix" evidence="8">
    <location>
        <begin position="72"/>
        <end position="75"/>
    </location>
</feature>
<feature type="strand" evidence="8">
    <location>
        <begin position="79"/>
        <end position="82"/>
    </location>
</feature>
<feature type="helix" evidence="8">
    <location>
        <begin position="83"/>
        <end position="88"/>
    </location>
</feature>
<feature type="strand" evidence="8">
    <location>
        <begin position="94"/>
        <end position="102"/>
    </location>
</feature>
<feature type="strand" evidence="8">
    <location>
        <begin position="106"/>
        <end position="108"/>
    </location>
</feature>
<feature type="strand" evidence="8">
    <location>
        <begin position="112"/>
        <end position="120"/>
    </location>
</feature>
<feature type="strand" evidence="9">
    <location>
        <begin position="134"/>
        <end position="137"/>
    </location>
</feature>
<feature type="strand" evidence="8">
    <location>
        <begin position="139"/>
        <end position="141"/>
    </location>
</feature>
<feature type="helix" evidence="8">
    <location>
        <begin position="144"/>
        <end position="146"/>
    </location>
</feature>
<feature type="helix" evidence="8">
    <location>
        <begin position="147"/>
        <end position="151"/>
    </location>
</feature>
<feature type="strand" evidence="8">
    <location>
        <begin position="162"/>
        <end position="165"/>
    </location>
</feature>
<feature type="helix" evidence="8">
    <location>
        <begin position="168"/>
        <end position="180"/>
    </location>
</feature>
<feature type="strand" evidence="8">
    <location>
        <begin position="190"/>
        <end position="192"/>
    </location>
</feature>
<feature type="strand" evidence="7">
    <location>
        <begin position="194"/>
        <end position="196"/>
    </location>
</feature>
<feature type="helix" evidence="8">
    <location>
        <begin position="207"/>
        <end position="209"/>
    </location>
</feature>
<sequence>MARKKVRPRLIAELARRVRALREQLNRPRDSQLYAVDYETLTRPFSGRRLPVRAWADVRRESRLLQLLGRLPLFGLGRLVTRKSWLWQHDEPCYWRLTRVRPDYTAQNLDHGKAWGILTFKGKTESEAREIEHVMYHDWRLVPKHEEEAFTAFTPAPEDSLASVPYPPLLRAMIIAERQKNGDTSTEEPMLNVQRIRMEPWDYPAKQEDKGRAKGTPV</sequence>
<name>RT34_HUMAN</name>
<organism>
    <name type="scientific">Homo sapiens</name>
    <name type="common">Human</name>
    <dbReference type="NCBI Taxonomy" id="9606"/>
    <lineage>
        <taxon>Eukaryota</taxon>
        <taxon>Metazoa</taxon>
        <taxon>Chordata</taxon>
        <taxon>Craniata</taxon>
        <taxon>Vertebrata</taxon>
        <taxon>Euteleostomi</taxon>
        <taxon>Mammalia</taxon>
        <taxon>Eutheria</taxon>
        <taxon>Euarchontoglires</taxon>
        <taxon>Primates</taxon>
        <taxon>Haplorrhini</taxon>
        <taxon>Catarrhini</taxon>
        <taxon>Hominidae</taxon>
        <taxon>Homo</taxon>
    </lineage>
</organism>